<gene>
    <name evidence="1" type="primary">hutI</name>
    <name type="ordered locus">Shew185_0095</name>
</gene>
<feature type="chain" id="PRO_1000007148" description="Imidazolonepropionase">
    <location>
        <begin position="1"/>
        <end position="408"/>
    </location>
</feature>
<feature type="binding site" evidence="1">
    <location>
        <position position="73"/>
    </location>
    <ligand>
        <name>Fe(3+)</name>
        <dbReference type="ChEBI" id="CHEBI:29034"/>
    </ligand>
</feature>
<feature type="binding site" evidence="1">
    <location>
        <position position="73"/>
    </location>
    <ligand>
        <name>Zn(2+)</name>
        <dbReference type="ChEBI" id="CHEBI:29105"/>
    </ligand>
</feature>
<feature type="binding site" evidence="1">
    <location>
        <position position="75"/>
    </location>
    <ligand>
        <name>Fe(3+)</name>
        <dbReference type="ChEBI" id="CHEBI:29034"/>
    </ligand>
</feature>
<feature type="binding site" evidence="1">
    <location>
        <position position="75"/>
    </location>
    <ligand>
        <name>Zn(2+)</name>
        <dbReference type="ChEBI" id="CHEBI:29105"/>
    </ligand>
</feature>
<feature type="binding site" evidence="1">
    <location>
        <position position="82"/>
    </location>
    <ligand>
        <name>4-imidazolone-5-propanoate</name>
        <dbReference type="ChEBI" id="CHEBI:77893"/>
    </ligand>
</feature>
<feature type="binding site" evidence="1">
    <location>
        <position position="145"/>
    </location>
    <ligand>
        <name>4-imidazolone-5-propanoate</name>
        <dbReference type="ChEBI" id="CHEBI:77893"/>
    </ligand>
</feature>
<feature type="binding site" evidence="1">
    <location>
        <position position="145"/>
    </location>
    <ligand>
        <name>N-formimidoyl-L-glutamate</name>
        <dbReference type="ChEBI" id="CHEBI:58928"/>
    </ligand>
</feature>
<feature type="binding site" evidence="1">
    <location>
        <position position="178"/>
    </location>
    <ligand>
        <name>4-imidazolone-5-propanoate</name>
        <dbReference type="ChEBI" id="CHEBI:77893"/>
    </ligand>
</feature>
<feature type="binding site" evidence="1">
    <location>
        <position position="243"/>
    </location>
    <ligand>
        <name>Fe(3+)</name>
        <dbReference type="ChEBI" id="CHEBI:29034"/>
    </ligand>
</feature>
<feature type="binding site" evidence="1">
    <location>
        <position position="243"/>
    </location>
    <ligand>
        <name>Zn(2+)</name>
        <dbReference type="ChEBI" id="CHEBI:29105"/>
    </ligand>
</feature>
<feature type="binding site" evidence="1">
    <location>
        <position position="246"/>
    </location>
    <ligand>
        <name>4-imidazolone-5-propanoate</name>
        <dbReference type="ChEBI" id="CHEBI:77893"/>
    </ligand>
</feature>
<feature type="binding site" evidence="1">
    <location>
        <position position="318"/>
    </location>
    <ligand>
        <name>Fe(3+)</name>
        <dbReference type="ChEBI" id="CHEBI:29034"/>
    </ligand>
</feature>
<feature type="binding site" evidence="1">
    <location>
        <position position="318"/>
    </location>
    <ligand>
        <name>Zn(2+)</name>
        <dbReference type="ChEBI" id="CHEBI:29105"/>
    </ligand>
</feature>
<feature type="binding site" evidence="1">
    <location>
        <position position="320"/>
    </location>
    <ligand>
        <name>N-formimidoyl-L-glutamate</name>
        <dbReference type="ChEBI" id="CHEBI:58928"/>
    </ligand>
</feature>
<feature type="binding site" evidence="1">
    <location>
        <position position="322"/>
    </location>
    <ligand>
        <name>N-formimidoyl-L-glutamate</name>
        <dbReference type="ChEBI" id="CHEBI:58928"/>
    </ligand>
</feature>
<feature type="binding site" evidence="1">
    <location>
        <position position="323"/>
    </location>
    <ligand>
        <name>4-imidazolone-5-propanoate</name>
        <dbReference type="ChEBI" id="CHEBI:77893"/>
    </ligand>
</feature>
<dbReference type="EC" id="3.5.2.7" evidence="1"/>
<dbReference type="EMBL" id="CP000753">
    <property type="protein sequence ID" value="ABS06267.1"/>
    <property type="molecule type" value="Genomic_DNA"/>
</dbReference>
<dbReference type="RefSeq" id="WP_011982048.1">
    <property type="nucleotide sequence ID" value="NC_009665.1"/>
</dbReference>
<dbReference type="SMR" id="A6WHH8"/>
<dbReference type="KEGG" id="sbm:Shew185_0095"/>
<dbReference type="HOGENOM" id="CLU_041647_0_0_6"/>
<dbReference type="UniPathway" id="UPA00379">
    <property type="reaction ID" value="UER00551"/>
</dbReference>
<dbReference type="GO" id="GO:0005737">
    <property type="term" value="C:cytoplasm"/>
    <property type="evidence" value="ECO:0007669"/>
    <property type="project" value="UniProtKB-SubCell"/>
</dbReference>
<dbReference type="GO" id="GO:0050480">
    <property type="term" value="F:imidazolonepropionase activity"/>
    <property type="evidence" value="ECO:0007669"/>
    <property type="project" value="UniProtKB-UniRule"/>
</dbReference>
<dbReference type="GO" id="GO:0005506">
    <property type="term" value="F:iron ion binding"/>
    <property type="evidence" value="ECO:0007669"/>
    <property type="project" value="UniProtKB-UniRule"/>
</dbReference>
<dbReference type="GO" id="GO:0008270">
    <property type="term" value="F:zinc ion binding"/>
    <property type="evidence" value="ECO:0007669"/>
    <property type="project" value="UniProtKB-UniRule"/>
</dbReference>
<dbReference type="GO" id="GO:0019556">
    <property type="term" value="P:L-histidine catabolic process to glutamate and formamide"/>
    <property type="evidence" value="ECO:0007669"/>
    <property type="project" value="UniProtKB-UniPathway"/>
</dbReference>
<dbReference type="GO" id="GO:0019557">
    <property type="term" value="P:L-histidine catabolic process to glutamate and formate"/>
    <property type="evidence" value="ECO:0007669"/>
    <property type="project" value="UniProtKB-UniPathway"/>
</dbReference>
<dbReference type="CDD" id="cd01296">
    <property type="entry name" value="Imidazolone-5PH"/>
    <property type="match status" value="1"/>
</dbReference>
<dbReference type="FunFam" id="3.20.20.140:FF:000007">
    <property type="entry name" value="Imidazolonepropionase"/>
    <property type="match status" value="1"/>
</dbReference>
<dbReference type="Gene3D" id="3.20.20.140">
    <property type="entry name" value="Metal-dependent hydrolases"/>
    <property type="match status" value="1"/>
</dbReference>
<dbReference type="Gene3D" id="2.30.40.10">
    <property type="entry name" value="Urease, subunit C, domain 1"/>
    <property type="match status" value="1"/>
</dbReference>
<dbReference type="HAMAP" id="MF_00372">
    <property type="entry name" value="HutI"/>
    <property type="match status" value="1"/>
</dbReference>
<dbReference type="InterPro" id="IPR006680">
    <property type="entry name" value="Amidohydro-rel"/>
</dbReference>
<dbReference type="InterPro" id="IPR005920">
    <property type="entry name" value="HutI"/>
</dbReference>
<dbReference type="InterPro" id="IPR011059">
    <property type="entry name" value="Metal-dep_hydrolase_composite"/>
</dbReference>
<dbReference type="InterPro" id="IPR032466">
    <property type="entry name" value="Metal_Hydrolase"/>
</dbReference>
<dbReference type="NCBIfam" id="TIGR01224">
    <property type="entry name" value="hutI"/>
    <property type="match status" value="1"/>
</dbReference>
<dbReference type="PANTHER" id="PTHR42752">
    <property type="entry name" value="IMIDAZOLONEPROPIONASE"/>
    <property type="match status" value="1"/>
</dbReference>
<dbReference type="PANTHER" id="PTHR42752:SF1">
    <property type="entry name" value="IMIDAZOLONEPROPIONASE-RELATED"/>
    <property type="match status" value="1"/>
</dbReference>
<dbReference type="Pfam" id="PF01979">
    <property type="entry name" value="Amidohydro_1"/>
    <property type="match status" value="1"/>
</dbReference>
<dbReference type="SUPFAM" id="SSF51338">
    <property type="entry name" value="Composite domain of metallo-dependent hydrolases"/>
    <property type="match status" value="1"/>
</dbReference>
<dbReference type="SUPFAM" id="SSF51556">
    <property type="entry name" value="Metallo-dependent hydrolases"/>
    <property type="match status" value="1"/>
</dbReference>
<comment type="function">
    <text evidence="1">Catalyzes the hydrolytic cleavage of the carbon-nitrogen bond in imidazolone-5-propanoate to yield N-formimidoyl-L-glutamate. It is the third step in the universal histidine degradation pathway.</text>
</comment>
<comment type="catalytic activity">
    <reaction evidence="1">
        <text>4-imidazolone-5-propanoate + H2O = N-formimidoyl-L-glutamate</text>
        <dbReference type="Rhea" id="RHEA:23660"/>
        <dbReference type="ChEBI" id="CHEBI:15377"/>
        <dbReference type="ChEBI" id="CHEBI:58928"/>
        <dbReference type="ChEBI" id="CHEBI:77893"/>
        <dbReference type="EC" id="3.5.2.7"/>
    </reaction>
</comment>
<comment type="cofactor">
    <cofactor evidence="1">
        <name>Zn(2+)</name>
        <dbReference type="ChEBI" id="CHEBI:29105"/>
    </cofactor>
    <cofactor evidence="1">
        <name>Fe(3+)</name>
        <dbReference type="ChEBI" id="CHEBI:29034"/>
    </cofactor>
    <text evidence="1">Binds 1 zinc or iron ion per subunit.</text>
</comment>
<comment type="pathway">
    <text evidence="1">Amino-acid degradation; L-histidine degradation into L-glutamate; N-formimidoyl-L-glutamate from L-histidine: step 3/3.</text>
</comment>
<comment type="subcellular location">
    <subcellularLocation>
        <location evidence="1">Cytoplasm</location>
    </subcellularLocation>
</comment>
<comment type="similarity">
    <text evidence="1">Belongs to the metallo-dependent hydrolases superfamily. HutI family.</text>
</comment>
<keyword id="KW-0963">Cytoplasm</keyword>
<keyword id="KW-0369">Histidine metabolism</keyword>
<keyword id="KW-0378">Hydrolase</keyword>
<keyword id="KW-0408">Iron</keyword>
<keyword id="KW-0479">Metal-binding</keyword>
<keyword id="KW-0862">Zinc</keyword>
<name>HUTI_SHEB8</name>
<organism>
    <name type="scientific">Shewanella baltica (strain OS185)</name>
    <dbReference type="NCBI Taxonomy" id="402882"/>
    <lineage>
        <taxon>Bacteria</taxon>
        <taxon>Pseudomonadati</taxon>
        <taxon>Pseudomonadota</taxon>
        <taxon>Gammaproteobacteria</taxon>
        <taxon>Alteromonadales</taxon>
        <taxon>Shewanellaceae</taxon>
        <taxon>Shewanella</taxon>
    </lineage>
</organism>
<proteinExistence type="inferred from homology"/>
<evidence type="ECO:0000255" key="1">
    <source>
        <dbReference type="HAMAP-Rule" id="MF_00372"/>
    </source>
</evidence>
<protein>
    <recommendedName>
        <fullName evidence="1">Imidazolonepropionase</fullName>
        <ecNumber evidence="1">3.5.2.7</ecNumber>
    </recommendedName>
    <alternativeName>
        <fullName evidence="1">Imidazolone-5-propionate hydrolase</fullName>
    </alternativeName>
</protein>
<accession>A6WHH8</accession>
<reference key="1">
    <citation type="submission" date="2007-07" db="EMBL/GenBank/DDBJ databases">
        <title>Complete sequence of chromosome of Shewanella baltica OS185.</title>
        <authorList>
            <consortium name="US DOE Joint Genome Institute"/>
            <person name="Copeland A."/>
            <person name="Lucas S."/>
            <person name="Lapidus A."/>
            <person name="Barry K."/>
            <person name="Glavina del Rio T."/>
            <person name="Dalin E."/>
            <person name="Tice H."/>
            <person name="Pitluck S."/>
            <person name="Sims D."/>
            <person name="Brettin T."/>
            <person name="Bruce D."/>
            <person name="Detter J.C."/>
            <person name="Han C."/>
            <person name="Schmutz J."/>
            <person name="Larimer F."/>
            <person name="Land M."/>
            <person name="Hauser L."/>
            <person name="Kyrpides N."/>
            <person name="Mikhailova N."/>
            <person name="Brettar I."/>
            <person name="Rodrigues J."/>
            <person name="Konstantinidis K."/>
            <person name="Tiedje J."/>
            <person name="Richardson P."/>
        </authorList>
    </citation>
    <scope>NUCLEOTIDE SEQUENCE [LARGE SCALE GENOMIC DNA]</scope>
    <source>
        <strain>OS185</strain>
    </source>
</reference>
<sequence length="408" mass="43944">MSWDQVWIDVNLATMDPSISAPYGAITNAAIAVKDGKIAWLGPRSELPAFDVLSIPVYRGKGGWITPGLIDAHTHLIFAGNRANEFELRLQGASYEEIARSGGGIISTVKACREADEAELFELGRQRLNALAKEGVTTVEIKSGYGLDTETELKILRVARELGKHHHVDVKTTFLGAHAIPPEYKDNSDGYVDLIINKMLPAVIAENLADAVDVFCENIAFNLEQTERVLSAAKAAGLEIKLHAEQLTNMGGSALAARLGAKSVDHIEYLDEAGVKALSESGTCAVLLPGAFYFLRETQIPPIDLLRQYGVPMVLASDFNPGSSPICSTLLMLNMGCTLFRLTPEEALKGLTLNAAKALGIEDNVGSLVVGKQADFCLWDIATPAQLAYSYGVNPCKDVVKNGKLVHQ</sequence>